<comment type="catalytic activity">
    <reaction evidence="1">
        <text>tRNA(Phe) + L-phenylalanine + ATP = L-phenylalanyl-tRNA(Phe) + AMP + diphosphate + H(+)</text>
        <dbReference type="Rhea" id="RHEA:19413"/>
        <dbReference type="Rhea" id="RHEA-COMP:9668"/>
        <dbReference type="Rhea" id="RHEA-COMP:9699"/>
        <dbReference type="ChEBI" id="CHEBI:15378"/>
        <dbReference type="ChEBI" id="CHEBI:30616"/>
        <dbReference type="ChEBI" id="CHEBI:33019"/>
        <dbReference type="ChEBI" id="CHEBI:58095"/>
        <dbReference type="ChEBI" id="CHEBI:78442"/>
        <dbReference type="ChEBI" id="CHEBI:78531"/>
        <dbReference type="ChEBI" id="CHEBI:456215"/>
        <dbReference type="EC" id="6.1.1.20"/>
    </reaction>
</comment>
<comment type="cofactor">
    <cofactor evidence="1">
        <name>Mg(2+)</name>
        <dbReference type="ChEBI" id="CHEBI:18420"/>
    </cofactor>
    <text evidence="1">Binds 2 magnesium ions per tetramer.</text>
</comment>
<comment type="subunit">
    <text evidence="1">Tetramer of two alpha and two beta subunits.</text>
</comment>
<comment type="subcellular location">
    <subcellularLocation>
        <location evidence="1">Cytoplasm</location>
    </subcellularLocation>
</comment>
<comment type="similarity">
    <text evidence="1">Belongs to the class-II aminoacyl-tRNA synthetase family. Phe-tRNA synthetase alpha subunit type 2 subfamily.</text>
</comment>
<dbReference type="EC" id="6.1.1.20" evidence="1"/>
<dbReference type="EMBL" id="AE008384">
    <property type="protein sequence ID" value="AAM31166.1"/>
    <property type="molecule type" value="Genomic_DNA"/>
</dbReference>
<dbReference type="SMR" id="Q8PWV6"/>
<dbReference type="DNASU" id="1479812"/>
<dbReference type="KEGG" id="mma:MM_1470"/>
<dbReference type="PATRIC" id="fig|192952.21.peg.1697"/>
<dbReference type="eggNOG" id="arCOG00410">
    <property type="taxonomic scope" value="Archaea"/>
</dbReference>
<dbReference type="HOGENOM" id="CLU_025086_2_2_2"/>
<dbReference type="Proteomes" id="UP000000595">
    <property type="component" value="Chromosome"/>
</dbReference>
<dbReference type="GO" id="GO:0005737">
    <property type="term" value="C:cytoplasm"/>
    <property type="evidence" value="ECO:0007669"/>
    <property type="project" value="UniProtKB-SubCell"/>
</dbReference>
<dbReference type="GO" id="GO:0005524">
    <property type="term" value="F:ATP binding"/>
    <property type="evidence" value="ECO:0007669"/>
    <property type="project" value="UniProtKB-UniRule"/>
</dbReference>
<dbReference type="GO" id="GO:0000287">
    <property type="term" value="F:magnesium ion binding"/>
    <property type="evidence" value="ECO:0007669"/>
    <property type="project" value="UniProtKB-UniRule"/>
</dbReference>
<dbReference type="GO" id="GO:0004826">
    <property type="term" value="F:phenylalanine-tRNA ligase activity"/>
    <property type="evidence" value="ECO:0007669"/>
    <property type="project" value="UniProtKB-UniRule"/>
</dbReference>
<dbReference type="GO" id="GO:0000049">
    <property type="term" value="F:tRNA binding"/>
    <property type="evidence" value="ECO:0007669"/>
    <property type="project" value="InterPro"/>
</dbReference>
<dbReference type="GO" id="GO:0006432">
    <property type="term" value="P:phenylalanyl-tRNA aminoacylation"/>
    <property type="evidence" value="ECO:0007669"/>
    <property type="project" value="UniProtKB-UniRule"/>
</dbReference>
<dbReference type="CDD" id="cd00496">
    <property type="entry name" value="PheRS_alpha_core"/>
    <property type="match status" value="1"/>
</dbReference>
<dbReference type="FunFam" id="3.30.930.10:FF:000095">
    <property type="entry name" value="Phenylalanine--tRNA ligase alpha subunit"/>
    <property type="match status" value="1"/>
</dbReference>
<dbReference type="Gene3D" id="1.10.10.2320">
    <property type="match status" value="1"/>
</dbReference>
<dbReference type="Gene3D" id="1.10.10.2330">
    <property type="match status" value="1"/>
</dbReference>
<dbReference type="Gene3D" id="3.30.1370.240">
    <property type="match status" value="1"/>
</dbReference>
<dbReference type="Gene3D" id="3.30.930.10">
    <property type="entry name" value="Bira Bifunctional Protein, Domain 2"/>
    <property type="match status" value="1"/>
</dbReference>
<dbReference type="HAMAP" id="MF_00282">
    <property type="entry name" value="Phe_tRNA_synth_alpha2"/>
    <property type="match status" value="1"/>
</dbReference>
<dbReference type="InterPro" id="IPR006195">
    <property type="entry name" value="aa-tRNA-synth_II"/>
</dbReference>
<dbReference type="InterPro" id="IPR045864">
    <property type="entry name" value="aa-tRNA-synth_II/BPL/LPL"/>
</dbReference>
<dbReference type="InterPro" id="IPR004529">
    <property type="entry name" value="Phe-tRNA-synth_IIc_asu"/>
</dbReference>
<dbReference type="InterPro" id="IPR022917">
    <property type="entry name" value="Phe_tRNA_ligase_alpha_bac/arc"/>
</dbReference>
<dbReference type="InterPro" id="IPR002319">
    <property type="entry name" value="Phenylalanyl-tRNA_Synthase"/>
</dbReference>
<dbReference type="NCBIfam" id="TIGR00468">
    <property type="entry name" value="pheS"/>
    <property type="match status" value="1"/>
</dbReference>
<dbReference type="NCBIfam" id="NF003210">
    <property type="entry name" value="PRK04172.1"/>
    <property type="match status" value="1"/>
</dbReference>
<dbReference type="PANTHER" id="PTHR11538:SF40">
    <property type="entry name" value="PHENYLALANINE--TRNA LIGASE ALPHA SUBUNIT"/>
    <property type="match status" value="1"/>
</dbReference>
<dbReference type="PANTHER" id="PTHR11538">
    <property type="entry name" value="PHENYLALANYL-TRNA SYNTHETASE"/>
    <property type="match status" value="1"/>
</dbReference>
<dbReference type="Pfam" id="PF01409">
    <property type="entry name" value="tRNA-synt_2d"/>
    <property type="match status" value="1"/>
</dbReference>
<dbReference type="SUPFAM" id="SSF55681">
    <property type="entry name" value="Class II aaRS and biotin synthetases"/>
    <property type="match status" value="1"/>
</dbReference>
<dbReference type="PROSITE" id="PS50862">
    <property type="entry name" value="AA_TRNA_LIGASE_II"/>
    <property type="match status" value="1"/>
</dbReference>
<proteinExistence type="inferred from homology"/>
<sequence length="495" mass="55607">MTVMSIQDNLTINEKKVLLALEELRSAVPDKLEEKSGLQIDAAMQAAFMLQEKELASVSEKVLERYSLTKEGEEYKKTGLPERQIIDALKNPVSLEELRSCFSPQTVGIATGWLVKKGWAKVENGIMVPSGEASEGKDEKALSAFAGKAKTLEELGADEGTVKDLLKRKLVVKHEEKFRTVSITDAGSELASQGLVLEEEIAQLTPELLKSGAWKEKKFRPYRLDITPKPLYGTKIHPYRRLIEQMRQIFLEMGFTEIKGGIIQSSFWNFDALFQPQDHPARDMQDTFHLGSTCQIPAEYSGKVAAMHENGGDIDSCGWGGIWDRELAGRNVLRTHTTSVTIKYLADNPEPPVKAFCIDRAYRRETIDPTHTPEFEQLEGVVMDKDMSFADLLGLLAEFYHRMGFEEVRFRPGYFPYTEPSVEPEVYVDGLGWVELGGAGVFRKEVTEPLGIKAPVLAWGLGVSRLAMLKLGLKDLRLLYQSDIDWLRKSEVCKI</sequence>
<accession>Q8PWV6</accession>
<feature type="chain" id="PRO_0000126812" description="Phenylalanine--tRNA ligase alpha subunit">
    <location>
        <begin position="1"/>
        <end position="495"/>
    </location>
</feature>
<feature type="binding site" evidence="1">
    <location>
        <position position="338"/>
    </location>
    <ligand>
        <name>L-phenylalanine</name>
        <dbReference type="ChEBI" id="CHEBI:58095"/>
    </ligand>
</feature>
<feature type="binding site" evidence="1">
    <location>
        <begin position="377"/>
        <end position="379"/>
    </location>
    <ligand>
        <name>L-phenylalanine</name>
        <dbReference type="ChEBI" id="CHEBI:58095"/>
    </ligand>
</feature>
<feature type="binding site" evidence="1">
    <location>
        <position position="417"/>
    </location>
    <ligand>
        <name>L-phenylalanine</name>
        <dbReference type="ChEBI" id="CHEBI:58095"/>
    </ligand>
</feature>
<feature type="binding site" evidence="1">
    <location>
        <position position="419"/>
    </location>
    <ligand>
        <name>Mg(2+)</name>
        <dbReference type="ChEBI" id="CHEBI:18420"/>
        <note>shared with beta subunit</note>
    </ligand>
</feature>
<feature type="binding site" evidence="1">
    <location>
        <position position="442"/>
    </location>
    <ligand>
        <name>L-phenylalanine</name>
        <dbReference type="ChEBI" id="CHEBI:58095"/>
    </ligand>
</feature>
<organism>
    <name type="scientific">Methanosarcina mazei (strain ATCC BAA-159 / DSM 3647 / Goe1 / Go1 / JCM 11833 / OCM 88)</name>
    <name type="common">Methanosarcina frisia</name>
    <dbReference type="NCBI Taxonomy" id="192952"/>
    <lineage>
        <taxon>Archaea</taxon>
        <taxon>Methanobacteriati</taxon>
        <taxon>Methanobacteriota</taxon>
        <taxon>Stenosarchaea group</taxon>
        <taxon>Methanomicrobia</taxon>
        <taxon>Methanosarcinales</taxon>
        <taxon>Methanosarcinaceae</taxon>
        <taxon>Methanosarcina</taxon>
    </lineage>
</organism>
<keyword id="KW-0030">Aminoacyl-tRNA synthetase</keyword>
<keyword id="KW-0067">ATP-binding</keyword>
<keyword id="KW-0963">Cytoplasm</keyword>
<keyword id="KW-0436">Ligase</keyword>
<keyword id="KW-0460">Magnesium</keyword>
<keyword id="KW-0479">Metal-binding</keyword>
<keyword id="KW-0547">Nucleotide-binding</keyword>
<keyword id="KW-0648">Protein biosynthesis</keyword>
<evidence type="ECO:0000255" key="1">
    <source>
        <dbReference type="HAMAP-Rule" id="MF_00282"/>
    </source>
</evidence>
<protein>
    <recommendedName>
        <fullName evidence="1">Phenylalanine--tRNA ligase alpha subunit</fullName>
        <ecNumber evidence="1">6.1.1.20</ecNumber>
    </recommendedName>
    <alternativeName>
        <fullName evidence="1">Phenylalanyl-tRNA synthetase alpha subunit</fullName>
        <shortName evidence="1">PheRS</shortName>
    </alternativeName>
</protein>
<reference key="1">
    <citation type="journal article" date="2002" name="J. Mol. Microbiol. Biotechnol.">
        <title>The genome of Methanosarcina mazei: evidence for lateral gene transfer between Bacteria and Archaea.</title>
        <authorList>
            <person name="Deppenmeier U."/>
            <person name="Johann A."/>
            <person name="Hartsch T."/>
            <person name="Merkl R."/>
            <person name="Schmitz R.A."/>
            <person name="Martinez-Arias R."/>
            <person name="Henne A."/>
            <person name="Wiezer A."/>
            <person name="Baeumer S."/>
            <person name="Jacobi C."/>
            <person name="Brueggemann H."/>
            <person name="Lienard T."/>
            <person name="Christmann A."/>
            <person name="Boemecke M."/>
            <person name="Steckel S."/>
            <person name="Bhattacharyya A."/>
            <person name="Lykidis A."/>
            <person name="Overbeek R."/>
            <person name="Klenk H.-P."/>
            <person name="Gunsalus R.P."/>
            <person name="Fritz H.-J."/>
            <person name="Gottschalk G."/>
        </authorList>
    </citation>
    <scope>NUCLEOTIDE SEQUENCE [LARGE SCALE GENOMIC DNA]</scope>
    <source>
        <strain>ATCC BAA-159 / DSM 3647 / Goe1 / Go1 / JCM 11833 / OCM 88</strain>
    </source>
</reference>
<gene>
    <name evidence="1" type="primary">pheS</name>
    <name type="ordered locus">MM_1470</name>
</gene>
<name>SYFA_METMA</name>